<dbReference type="EMBL" id="M18041">
    <property type="protein sequence ID" value="AAA66158.1"/>
    <property type="status" value="ALT_INIT"/>
    <property type="molecule type" value="Genomic_RNA"/>
</dbReference>
<dbReference type="PIR" id="B34071">
    <property type="entry name" value="TVFVF4"/>
</dbReference>
<dbReference type="SMR" id="P23050"/>
<dbReference type="GO" id="GO:0042025">
    <property type="term" value="C:host cell nucleus"/>
    <property type="evidence" value="ECO:0007669"/>
    <property type="project" value="UniProtKB-SubCell"/>
</dbReference>
<dbReference type="GO" id="GO:0000981">
    <property type="term" value="F:DNA-binding transcription factor activity, RNA polymerase II-specific"/>
    <property type="evidence" value="ECO:0007669"/>
    <property type="project" value="TreeGrafter"/>
</dbReference>
<dbReference type="GO" id="GO:0000978">
    <property type="term" value="F:RNA polymerase II cis-regulatory region sequence-specific DNA binding"/>
    <property type="evidence" value="ECO:0007669"/>
    <property type="project" value="TreeGrafter"/>
</dbReference>
<dbReference type="CDD" id="cd14721">
    <property type="entry name" value="bZIP_Fos"/>
    <property type="match status" value="1"/>
</dbReference>
<dbReference type="FunFam" id="1.20.5.170:FF:000006">
    <property type="entry name" value="fos-related antigen 2 isoform X1"/>
    <property type="match status" value="1"/>
</dbReference>
<dbReference type="Gene3D" id="1.20.5.170">
    <property type="match status" value="1"/>
</dbReference>
<dbReference type="InterPro" id="IPR000837">
    <property type="entry name" value="AP-1"/>
</dbReference>
<dbReference type="InterPro" id="IPR004827">
    <property type="entry name" value="bZIP"/>
</dbReference>
<dbReference type="InterPro" id="IPR046347">
    <property type="entry name" value="bZIP_sf"/>
</dbReference>
<dbReference type="PANTHER" id="PTHR23351">
    <property type="entry name" value="FOS TRANSCRIPTION FACTOR-RELATED"/>
    <property type="match status" value="1"/>
</dbReference>
<dbReference type="PANTHER" id="PTHR23351:SF4">
    <property type="entry name" value="PROTEIN C-FOS"/>
    <property type="match status" value="1"/>
</dbReference>
<dbReference type="Pfam" id="PF00170">
    <property type="entry name" value="bZIP_1"/>
    <property type="match status" value="1"/>
</dbReference>
<dbReference type="PRINTS" id="PR00042">
    <property type="entry name" value="LEUZIPPRFOS"/>
</dbReference>
<dbReference type="SMART" id="SM00338">
    <property type="entry name" value="BRLZ"/>
    <property type="match status" value="1"/>
</dbReference>
<dbReference type="SUPFAM" id="SSF57959">
    <property type="entry name" value="Leucine zipper domain"/>
    <property type="match status" value="1"/>
</dbReference>
<dbReference type="PROSITE" id="PS50217">
    <property type="entry name" value="BZIP"/>
    <property type="match status" value="1"/>
</dbReference>
<dbReference type="PROSITE" id="PS00036">
    <property type="entry name" value="BZIP_BASIC"/>
    <property type="match status" value="1"/>
</dbReference>
<accession>P23050</accession>
<proteinExistence type="inferred from homology"/>
<comment type="subcellular location">
    <subcellularLocation>
        <location evidence="3">Host nucleus</location>
    </subcellularLocation>
</comment>
<comment type="similarity">
    <text evidence="3">Belongs to the bZIP family. Fos subfamily.</text>
</comment>
<comment type="sequence caution" evidence="3">
    <conflict type="erroneous initiation">
        <sequence resource="EMBL-CDS" id="AAA66158"/>
    </conflict>
</comment>
<organismHost>
    <name type="scientific">Galliformes</name>
    <dbReference type="NCBI Taxonomy" id="8976"/>
</organismHost>
<reference key="1">
    <citation type="journal article" date="1987" name="J. Virol.">
        <title>An avian transforming retrovirus isolated from a nephroblastoma that carries the fos gene as the oncogene.</title>
        <authorList>
            <person name="Nishizawa M."/>
            <person name="Goto N."/>
            <person name="Kawai S."/>
        </authorList>
    </citation>
    <scope>NUCLEOTIDE SEQUENCE [GENOMIC RNA]</scope>
</reference>
<gene>
    <name type="primary">V-FOS</name>
</gene>
<keyword id="KW-0238">DNA-binding</keyword>
<keyword id="KW-1048">Host nucleus</keyword>
<keyword id="KW-0553">Oncogene</keyword>
<keyword id="KW-0597">Phosphoprotein</keyword>
<name>FOS_AVINK</name>
<sequence>SQDFCTDLAVSSANFVPTVTAISTSPDLQWLVQPTLISSVAPSQNRGHPYGVPAPAPPAAYSRPAVLKAPGGRGQSIGRRGKVEQLSPEEEEKRRIRRERNKMAAAKCRNRRRELTDTLQAETDQLEEEKSALQAEIANLLKEKEKLEFILAAHRPACKMPEELRFSEELAAATALDLGAPSPAAAEEAFALPLMTEAPPAVPPKEPSGSGLELKAEPFDELLFSAGPREASRSVPDMDLPGASSFYASDWEPLGAGSGGELEPLCTPVVTCTPCPSTYTSTFVFTYPEADAFPSCAAAHRKGSSSNEPSSDSLSSPTLLAL</sequence>
<feature type="chain" id="PRO_0000076459" description="p55-v-Fos-transforming protein">
    <location>
        <begin position="1"/>
        <end position="322"/>
    </location>
</feature>
<feature type="domain" description="bZIP" evidence="1">
    <location>
        <begin position="91"/>
        <end position="154"/>
    </location>
</feature>
<feature type="region of interest" description="Disordered" evidence="2">
    <location>
        <begin position="69"/>
        <end position="95"/>
    </location>
</feature>
<feature type="region of interest" description="Basic motif" evidence="1">
    <location>
        <begin position="93"/>
        <end position="113"/>
    </location>
</feature>
<feature type="region of interest" description="Leucine-zipper" evidence="1">
    <location>
        <begin position="119"/>
        <end position="147"/>
    </location>
</feature>
<feature type="region of interest" description="Disordered" evidence="2">
    <location>
        <begin position="298"/>
        <end position="322"/>
    </location>
</feature>
<feature type="compositionally biased region" description="Low complexity" evidence="2">
    <location>
        <begin position="304"/>
        <end position="316"/>
    </location>
</feature>
<evidence type="ECO:0000255" key="1">
    <source>
        <dbReference type="PROSITE-ProRule" id="PRU00978"/>
    </source>
</evidence>
<evidence type="ECO:0000256" key="2">
    <source>
        <dbReference type="SAM" id="MobiDB-lite"/>
    </source>
</evidence>
<evidence type="ECO:0000305" key="3"/>
<organism>
    <name type="scientific">Avian retrovirus NK24</name>
    <dbReference type="NCBI Taxonomy" id="11875"/>
    <lineage>
        <taxon>Viruses</taxon>
        <taxon>Riboviria</taxon>
        <taxon>Pararnavirae</taxon>
        <taxon>Artverviricota</taxon>
        <taxon>Revtraviricetes</taxon>
        <taxon>Ortervirales</taxon>
        <taxon>Retroviridae</taxon>
        <taxon>Orthoretrovirinae</taxon>
        <taxon>Alpharetrovirus</taxon>
    </lineage>
</organism>
<protein>
    <recommendedName>
        <fullName>p55-v-Fos-transforming protein</fullName>
    </recommendedName>
</protein>